<sequence length="189" mass="21688">MVKANYIRAGRLVRILRGPRQNRVGVIVDIVDANRVLVENPCEQKMWRHVQNLKNVEPLKFCVSISRNCSTKALKEALESKKVLEKYAATKVRRPHRAKKAFAESTDFERYQLRVAKRSRAYWARKIFDENDKKNPVSWHKVALKKLLKNAKKVDSTPAAKKRVEKARAARKARLAAGKSKTKVAASKK</sequence>
<protein>
    <recommendedName>
        <fullName evidence="1">Large ribosomal subunit protein eL14</fullName>
    </recommendedName>
    <alternativeName>
        <fullName>23 kDa cell surface protein homolog</fullName>
    </alternativeName>
    <alternativeName>
        <fullName evidence="1">60S ribosomal protein L14</fullName>
    </alternativeName>
</protein>
<name>RL14_TRYBB</name>
<comment type="function">
    <text evidence="1">Component of the large ribosomal subunit. The ribosome is a large ribonucleoprotein complex responsible for the synthesis of proteins in the cell.</text>
</comment>
<comment type="similarity">
    <text evidence="1">Belongs to the eukaryotic ribosomal protein eL14 family.</text>
</comment>
<accession>P55842</accession>
<keyword id="KW-0002">3D-structure</keyword>
<keyword id="KW-0687">Ribonucleoprotein</keyword>
<keyword id="KW-0689">Ribosomal protein</keyword>
<organism>
    <name type="scientific">Trypanosoma brucei brucei</name>
    <dbReference type="NCBI Taxonomy" id="5702"/>
    <lineage>
        <taxon>Eukaryota</taxon>
        <taxon>Discoba</taxon>
        <taxon>Euglenozoa</taxon>
        <taxon>Kinetoplastea</taxon>
        <taxon>Metakinetoplastina</taxon>
        <taxon>Trypanosomatida</taxon>
        <taxon>Trypanosomatidae</taxon>
        <taxon>Trypanosoma</taxon>
    </lineage>
</organism>
<proteinExistence type="evidence at protein level"/>
<evidence type="ECO:0000305" key="1"/>
<dbReference type="EMBL" id="U77936">
    <property type="protein sequence ID" value="AAB38406.1"/>
    <property type="molecule type" value="mRNA"/>
</dbReference>
<dbReference type="PDB" id="4V8M">
    <property type="method" value="EM"/>
    <property type="resolution" value="5.57 A"/>
    <property type="chains" value="BP=1-189"/>
</dbReference>
<dbReference type="PDBsum" id="4V8M"/>
<dbReference type="SMR" id="P55842"/>
<dbReference type="IntAct" id="P55842">
    <property type="interactions" value="1"/>
</dbReference>
<dbReference type="GO" id="GO:0022625">
    <property type="term" value="C:cytosolic large ribosomal subunit"/>
    <property type="evidence" value="ECO:0007669"/>
    <property type="project" value="TreeGrafter"/>
</dbReference>
<dbReference type="GO" id="GO:0003723">
    <property type="term" value="F:RNA binding"/>
    <property type="evidence" value="ECO:0007669"/>
    <property type="project" value="InterPro"/>
</dbReference>
<dbReference type="GO" id="GO:0003735">
    <property type="term" value="F:structural constituent of ribosome"/>
    <property type="evidence" value="ECO:0007669"/>
    <property type="project" value="InterPro"/>
</dbReference>
<dbReference type="GO" id="GO:0042273">
    <property type="term" value="P:ribosomal large subunit biogenesis"/>
    <property type="evidence" value="ECO:0007669"/>
    <property type="project" value="TreeGrafter"/>
</dbReference>
<dbReference type="GO" id="GO:0006412">
    <property type="term" value="P:translation"/>
    <property type="evidence" value="ECO:0007669"/>
    <property type="project" value="InterPro"/>
</dbReference>
<dbReference type="CDD" id="cd06088">
    <property type="entry name" value="KOW_RPL14"/>
    <property type="match status" value="1"/>
</dbReference>
<dbReference type="Gene3D" id="2.30.30.30">
    <property type="match status" value="1"/>
</dbReference>
<dbReference type="InterPro" id="IPR005824">
    <property type="entry name" value="KOW"/>
</dbReference>
<dbReference type="InterPro" id="IPR014722">
    <property type="entry name" value="Rib_uL2_dom2"/>
</dbReference>
<dbReference type="InterPro" id="IPR039660">
    <property type="entry name" value="Ribosomal_eL14"/>
</dbReference>
<dbReference type="InterPro" id="IPR002784">
    <property type="entry name" value="Ribosomal_eL14_dom"/>
</dbReference>
<dbReference type="InterPro" id="IPR041985">
    <property type="entry name" value="Ribosomal_eL14_KOW"/>
</dbReference>
<dbReference type="InterPro" id="IPR008991">
    <property type="entry name" value="Translation_prot_SH3-like_sf"/>
</dbReference>
<dbReference type="PANTHER" id="PTHR11127">
    <property type="entry name" value="60S RIBOSOMAL PROTEIN L14"/>
    <property type="match status" value="1"/>
</dbReference>
<dbReference type="PANTHER" id="PTHR11127:SF2">
    <property type="entry name" value="LARGE RIBOSOMAL SUBUNIT PROTEIN EL14"/>
    <property type="match status" value="1"/>
</dbReference>
<dbReference type="Pfam" id="PF00467">
    <property type="entry name" value="KOW"/>
    <property type="match status" value="1"/>
</dbReference>
<dbReference type="Pfam" id="PF01929">
    <property type="entry name" value="Ribosomal_L14e"/>
    <property type="match status" value="1"/>
</dbReference>
<dbReference type="SUPFAM" id="SSF50104">
    <property type="entry name" value="Translation proteins SH3-like domain"/>
    <property type="match status" value="1"/>
</dbReference>
<reference key="1">
    <citation type="submission" date="1996-12" db="EMBL/GenBank/DDBJ databases">
        <authorList>
            <person name="Djikeng A."/>
            <person name="Majiwa P.A.O."/>
        </authorList>
    </citation>
    <scope>NUCLEOTIDE SEQUENCE [MRNA]</scope>
    <source>
        <strain>WRATat 1.1</strain>
    </source>
</reference>
<feature type="chain" id="PRO_0000132039" description="Large ribosomal subunit protein eL14">
    <location>
        <begin position="1"/>
        <end position="189"/>
    </location>
</feature>